<name>NHAA1_CAMJE</name>
<accession>Q0P7X4</accession>
<sequence>MNNIVHKLKTLVLNEAFGGVLLIVCTLLALLVQNGSFSEHYREFLNLKVGFSVGEFELNKPFLLWINDGLISIFFFAIGLELKKEFLHGDFKNPKNIVLPFMAALGGILIPAMLFALVNIGDAYTLKGWAIPTATDTAFALAILMMCGKHIPSSLKIFLLSLAIFDDVGAILIIAIFYTTKLSIAAFVIAGLAILVMLILNLLGITRKSFYFICSVILWISVLKSGVHATLAGIVTAFFIPMQTKNGEAFLEEIYESLKFWIAFIILPLFAFANAGVNLSNIDIGAIFSGVSIGIFLGLFVGKQVGVFLFSYLAIRFKFAALPQGSNLKQLYGVCILTGIGFTMSLFIDGLAYEVSDIFNYADNLAILIASFCSGIWGFIYLKFFTTRS</sequence>
<gene>
    <name evidence="1" type="primary">nhaA1</name>
    <name type="ordered locus">Cj1654c</name>
</gene>
<reference key="1">
    <citation type="journal article" date="2000" name="Nature">
        <title>The genome sequence of the food-borne pathogen Campylobacter jejuni reveals hypervariable sequences.</title>
        <authorList>
            <person name="Parkhill J."/>
            <person name="Wren B.W."/>
            <person name="Mungall K.L."/>
            <person name="Ketley J.M."/>
            <person name="Churcher C.M."/>
            <person name="Basham D."/>
            <person name="Chillingworth T."/>
            <person name="Davies R.M."/>
            <person name="Feltwell T."/>
            <person name="Holroyd S."/>
            <person name="Jagels K."/>
            <person name="Karlyshev A.V."/>
            <person name="Moule S."/>
            <person name="Pallen M.J."/>
            <person name="Penn C.W."/>
            <person name="Quail M.A."/>
            <person name="Rajandream M.A."/>
            <person name="Rutherford K.M."/>
            <person name="van Vliet A.H.M."/>
            <person name="Whitehead S."/>
            <person name="Barrell B.G."/>
        </authorList>
    </citation>
    <scope>NUCLEOTIDE SEQUENCE [LARGE SCALE GENOMIC DNA]</scope>
    <source>
        <strain>ATCC 700819 / NCTC 11168</strain>
    </source>
</reference>
<feature type="chain" id="PRO_0000334255" description="Na(+)/H(+) antiporter NhaA 1">
    <location>
        <begin position="1"/>
        <end position="389"/>
    </location>
</feature>
<feature type="transmembrane region" description="Helical" evidence="1">
    <location>
        <begin position="12"/>
        <end position="32"/>
    </location>
</feature>
<feature type="transmembrane region" description="Helical" evidence="1">
    <location>
        <begin position="62"/>
        <end position="82"/>
    </location>
</feature>
<feature type="transmembrane region" description="Helical" evidence="1">
    <location>
        <begin position="97"/>
        <end position="117"/>
    </location>
</feature>
<feature type="transmembrane region" description="Helical" evidence="1">
    <location>
        <begin position="128"/>
        <end position="148"/>
    </location>
</feature>
<feature type="transmembrane region" description="Helical" evidence="1">
    <location>
        <begin position="157"/>
        <end position="177"/>
    </location>
</feature>
<feature type="transmembrane region" description="Helical" evidence="1">
    <location>
        <begin position="184"/>
        <end position="204"/>
    </location>
</feature>
<feature type="transmembrane region" description="Helical" evidence="1">
    <location>
        <begin position="220"/>
        <end position="240"/>
    </location>
</feature>
<feature type="transmembrane region" description="Helical" evidence="1">
    <location>
        <begin position="260"/>
        <end position="280"/>
    </location>
</feature>
<feature type="transmembrane region" description="Helical" evidence="1">
    <location>
        <begin position="282"/>
        <end position="302"/>
    </location>
</feature>
<feature type="transmembrane region" description="Helical" evidence="1">
    <location>
        <begin position="331"/>
        <end position="351"/>
    </location>
</feature>
<feature type="transmembrane region" description="Helical" evidence="1">
    <location>
        <begin position="365"/>
        <end position="385"/>
    </location>
</feature>
<evidence type="ECO:0000255" key="1">
    <source>
        <dbReference type="HAMAP-Rule" id="MF_01844"/>
    </source>
</evidence>
<keyword id="KW-0050">Antiport</keyword>
<keyword id="KW-0997">Cell inner membrane</keyword>
<keyword id="KW-1003">Cell membrane</keyword>
<keyword id="KW-0406">Ion transport</keyword>
<keyword id="KW-0472">Membrane</keyword>
<keyword id="KW-1185">Reference proteome</keyword>
<keyword id="KW-0915">Sodium</keyword>
<keyword id="KW-0739">Sodium transport</keyword>
<keyword id="KW-0812">Transmembrane</keyword>
<keyword id="KW-1133">Transmembrane helix</keyword>
<keyword id="KW-0813">Transport</keyword>
<proteinExistence type="inferred from homology"/>
<protein>
    <recommendedName>
        <fullName evidence="1">Na(+)/H(+) antiporter NhaA 1</fullName>
    </recommendedName>
    <alternativeName>
        <fullName evidence="1">Sodium/proton antiporter NhaA 1</fullName>
    </alternativeName>
</protein>
<dbReference type="EMBL" id="AL111168">
    <property type="protein sequence ID" value="CAL35751.1"/>
    <property type="molecule type" value="Genomic_DNA"/>
</dbReference>
<dbReference type="PIR" id="D81262">
    <property type="entry name" value="D81262"/>
</dbReference>
<dbReference type="SMR" id="Q0P7X4"/>
<dbReference type="STRING" id="192222.Cj1654c"/>
<dbReference type="PaxDb" id="192222-Cj1654c"/>
<dbReference type="EnsemblBacteria" id="CAL35751">
    <property type="protein sequence ID" value="CAL35751"/>
    <property type="gene ID" value="Cj1654c"/>
</dbReference>
<dbReference type="KEGG" id="cje:Cj1654c"/>
<dbReference type="PATRIC" id="fig|192222.6.peg.1630"/>
<dbReference type="eggNOG" id="COG3004">
    <property type="taxonomic scope" value="Bacteria"/>
</dbReference>
<dbReference type="HOGENOM" id="CLU_015803_1_0_7"/>
<dbReference type="OrthoDB" id="9808135at2"/>
<dbReference type="Proteomes" id="UP000000799">
    <property type="component" value="Chromosome"/>
</dbReference>
<dbReference type="GO" id="GO:0005886">
    <property type="term" value="C:plasma membrane"/>
    <property type="evidence" value="ECO:0007669"/>
    <property type="project" value="UniProtKB-SubCell"/>
</dbReference>
<dbReference type="GO" id="GO:0015385">
    <property type="term" value="F:sodium:proton antiporter activity"/>
    <property type="evidence" value="ECO:0007669"/>
    <property type="project" value="TreeGrafter"/>
</dbReference>
<dbReference type="GO" id="GO:0006885">
    <property type="term" value="P:regulation of pH"/>
    <property type="evidence" value="ECO:0007669"/>
    <property type="project" value="InterPro"/>
</dbReference>
<dbReference type="Gene3D" id="1.20.1530.10">
    <property type="entry name" value="Na+/H+ antiporter like domain"/>
    <property type="match status" value="1"/>
</dbReference>
<dbReference type="HAMAP" id="MF_01844">
    <property type="entry name" value="NhaA"/>
    <property type="match status" value="1"/>
</dbReference>
<dbReference type="InterPro" id="IPR023171">
    <property type="entry name" value="Na/H_antiporter_dom_sf"/>
</dbReference>
<dbReference type="InterPro" id="IPR004670">
    <property type="entry name" value="NhaA"/>
</dbReference>
<dbReference type="NCBIfam" id="TIGR00773">
    <property type="entry name" value="NhaA"/>
    <property type="match status" value="1"/>
</dbReference>
<dbReference type="NCBIfam" id="NF007111">
    <property type="entry name" value="PRK09560.1"/>
    <property type="match status" value="1"/>
</dbReference>
<dbReference type="NCBIfam" id="NF007112">
    <property type="entry name" value="PRK09561.1"/>
    <property type="match status" value="1"/>
</dbReference>
<dbReference type="PANTHER" id="PTHR30341:SF0">
    <property type="entry name" value="NA(+)_H(+) ANTIPORTER NHAA"/>
    <property type="match status" value="1"/>
</dbReference>
<dbReference type="PANTHER" id="PTHR30341">
    <property type="entry name" value="SODIUM ION/PROTON ANTIPORTER NHAA-RELATED"/>
    <property type="match status" value="1"/>
</dbReference>
<dbReference type="Pfam" id="PF06965">
    <property type="entry name" value="Na_H_antiport_1"/>
    <property type="match status" value="1"/>
</dbReference>
<comment type="function">
    <text evidence="1">Na(+)/H(+) antiporter that extrudes sodium in exchange for external protons.</text>
</comment>
<comment type="catalytic activity">
    <reaction evidence="1">
        <text>Na(+)(in) + 2 H(+)(out) = Na(+)(out) + 2 H(+)(in)</text>
        <dbReference type="Rhea" id="RHEA:29251"/>
        <dbReference type="ChEBI" id="CHEBI:15378"/>
        <dbReference type="ChEBI" id="CHEBI:29101"/>
    </reaction>
    <physiologicalReaction direction="left-to-right" evidence="1">
        <dbReference type="Rhea" id="RHEA:29252"/>
    </physiologicalReaction>
</comment>
<comment type="subcellular location">
    <subcellularLocation>
        <location evidence="1">Cell inner membrane</location>
        <topology evidence="1">Multi-pass membrane protein</topology>
    </subcellularLocation>
</comment>
<comment type="similarity">
    <text evidence="1">Belongs to the NhaA Na(+)/H(+) (TC 2.A.33) antiporter family.</text>
</comment>
<organism>
    <name type="scientific">Campylobacter jejuni subsp. jejuni serotype O:2 (strain ATCC 700819 / NCTC 11168)</name>
    <dbReference type="NCBI Taxonomy" id="192222"/>
    <lineage>
        <taxon>Bacteria</taxon>
        <taxon>Pseudomonadati</taxon>
        <taxon>Campylobacterota</taxon>
        <taxon>Epsilonproteobacteria</taxon>
        <taxon>Campylobacterales</taxon>
        <taxon>Campylobacteraceae</taxon>
        <taxon>Campylobacter</taxon>
    </lineage>
</organism>